<keyword id="KW-0131">Cell cycle</keyword>
<keyword id="KW-0175">Coiled coil</keyword>
<keyword id="KW-0238">DNA-binding</keyword>
<keyword id="KW-0479">Metal-binding</keyword>
<keyword id="KW-0539">Nucleus</keyword>
<keyword id="KW-1185">Reference proteome</keyword>
<keyword id="KW-0804">Transcription</keyword>
<keyword id="KW-0805">Transcription regulation</keyword>
<keyword id="KW-0862">Zinc</keyword>
<keyword id="KW-0863">Zinc-finger</keyword>
<protein>
    <recommendedName>
        <fullName>THAP domain-containing protein 1</fullName>
    </recommendedName>
</protein>
<reference key="1">
    <citation type="submission" date="2005-08" db="EMBL/GenBank/DDBJ databases">
        <authorList>
            <consortium name="NIH - Mammalian Gene Collection (MGC) project"/>
        </authorList>
    </citation>
    <scope>NUCLEOTIDE SEQUENCE [LARGE SCALE MRNA]</scope>
    <source>
        <strain>Crossbred X Angus</strain>
        <tissue>Ileum</tissue>
    </source>
</reference>
<proteinExistence type="evidence at transcript level"/>
<feature type="chain" id="PRO_0000068636" description="THAP domain-containing protein 1">
    <location>
        <begin position="1"/>
        <end position="213"/>
    </location>
</feature>
<feature type="zinc finger region" description="THAP-type" evidence="3">
    <location>
        <begin position="5"/>
        <end position="57"/>
    </location>
</feature>
<feature type="coiled-coil region" evidence="2">
    <location>
        <begin position="139"/>
        <end position="190"/>
    </location>
</feature>
<feature type="short sequence motif" description="HCFC1-binding motif (HBM)" evidence="1">
    <location>
        <begin position="134"/>
        <end position="137"/>
    </location>
</feature>
<organism>
    <name type="scientific">Bos taurus</name>
    <name type="common">Bovine</name>
    <dbReference type="NCBI Taxonomy" id="9913"/>
    <lineage>
        <taxon>Eukaryota</taxon>
        <taxon>Metazoa</taxon>
        <taxon>Chordata</taxon>
        <taxon>Craniata</taxon>
        <taxon>Vertebrata</taxon>
        <taxon>Euteleostomi</taxon>
        <taxon>Mammalia</taxon>
        <taxon>Eutheria</taxon>
        <taxon>Laurasiatheria</taxon>
        <taxon>Artiodactyla</taxon>
        <taxon>Ruminantia</taxon>
        <taxon>Pecora</taxon>
        <taxon>Bovidae</taxon>
        <taxon>Bovinae</taxon>
        <taxon>Bos</taxon>
    </lineage>
</organism>
<accession>Q3T0G1</accession>
<sequence>MVQSCSAYGCKNRYDKDKPVSFHKFPLTRPSLCKKWEAAVRRKNFKPTKYSSICSEHFTPDCFKRECNNKLLKEDAVPTIFLCTEPHDKKEDLLEPQEQPPPPPLTPPISQVDAAIGLLMPPLQTPDNLSVFCDHNYTVEDTMHQRKRIHQLEQQVEKLRKKLKTAQQRCRRQERQLEKLKEVVHFQKEKDGASERGYVILPNDYFEIVEVPA</sequence>
<gene>
    <name type="primary">THAP1</name>
</gene>
<dbReference type="EMBL" id="BC102409">
    <property type="protein sequence ID" value="AAI02410.1"/>
    <property type="molecule type" value="mRNA"/>
</dbReference>
<dbReference type="RefSeq" id="NP_001029820.1">
    <property type="nucleotide sequence ID" value="NM_001034648.1"/>
</dbReference>
<dbReference type="BMRB" id="Q3T0G1"/>
<dbReference type="SMR" id="Q3T0G1"/>
<dbReference type="FunCoup" id="Q3T0G1">
    <property type="interactions" value="2528"/>
</dbReference>
<dbReference type="STRING" id="9913.ENSBTAP00000010035"/>
<dbReference type="PaxDb" id="9913-ENSBTAP00000010035"/>
<dbReference type="GeneID" id="538615"/>
<dbReference type="KEGG" id="bta:538615"/>
<dbReference type="CTD" id="55145"/>
<dbReference type="VEuPathDB" id="HostDB:ENSBTAG00000007629"/>
<dbReference type="eggNOG" id="KOG1721">
    <property type="taxonomic scope" value="Eukaryota"/>
</dbReference>
<dbReference type="HOGENOM" id="CLU_076186_2_1_1"/>
<dbReference type="InParanoid" id="Q3T0G1"/>
<dbReference type="OMA" id="TKDCFKR"/>
<dbReference type="OrthoDB" id="9867479at2759"/>
<dbReference type="TreeFam" id="TF330127"/>
<dbReference type="Proteomes" id="UP000009136">
    <property type="component" value="Chromosome 27"/>
</dbReference>
<dbReference type="Bgee" id="ENSBTAG00000007629">
    <property type="expression patterns" value="Expressed in semen and 109 other cell types or tissues"/>
</dbReference>
<dbReference type="GO" id="GO:0005634">
    <property type="term" value="C:nucleus"/>
    <property type="evidence" value="ECO:0000250"/>
    <property type="project" value="UniProtKB"/>
</dbReference>
<dbReference type="GO" id="GO:0016605">
    <property type="term" value="C:PML body"/>
    <property type="evidence" value="ECO:0007669"/>
    <property type="project" value="UniProtKB-SubCell"/>
</dbReference>
<dbReference type="GO" id="GO:0003700">
    <property type="term" value="F:DNA-binding transcription factor activity"/>
    <property type="evidence" value="ECO:0000318"/>
    <property type="project" value="GO_Central"/>
</dbReference>
<dbReference type="GO" id="GO:0042803">
    <property type="term" value="F:protein homodimerization activity"/>
    <property type="evidence" value="ECO:0000250"/>
    <property type="project" value="UniProtKB"/>
</dbReference>
<dbReference type="GO" id="GO:0000978">
    <property type="term" value="F:RNA polymerase II cis-regulatory region sequence-specific DNA binding"/>
    <property type="evidence" value="ECO:0000318"/>
    <property type="project" value="GO_Central"/>
</dbReference>
<dbReference type="GO" id="GO:0043565">
    <property type="term" value="F:sequence-specific DNA binding"/>
    <property type="evidence" value="ECO:0000250"/>
    <property type="project" value="UniProtKB"/>
</dbReference>
<dbReference type="GO" id="GO:0008270">
    <property type="term" value="F:zinc ion binding"/>
    <property type="evidence" value="ECO:0000250"/>
    <property type="project" value="UniProtKB"/>
</dbReference>
<dbReference type="GO" id="GO:0006351">
    <property type="term" value="P:DNA-templated transcription"/>
    <property type="evidence" value="ECO:0000250"/>
    <property type="project" value="UniProtKB"/>
</dbReference>
<dbReference type="GO" id="GO:0001935">
    <property type="term" value="P:endothelial cell proliferation"/>
    <property type="evidence" value="ECO:0000250"/>
    <property type="project" value="UniProtKB"/>
</dbReference>
<dbReference type="GO" id="GO:0006355">
    <property type="term" value="P:regulation of DNA-templated transcription"/>
    <property type="evidence" value="ECO:0000250"/>
    <property type="project" value="UniProtKB"/>
</dbReference>
<dbReference type="GO" id="GO:0007346">
    <property type="term" value="P:regulation of mitotic cell cycle"/>
    <property type="evidence" value="ECO:0000250"/>
    <property type="project" value="UniProtKB"/>
</dbReference>
<dbReference type="GO" id="GO:0006357">
    <property type="term" value="P:regulation of transcription by RNA polymerase II"/>
    <property type="evidence" value="ECO:0000318"/>
    <property type="project" value="GO_Central"/>
</dbReference>
<dbReference type="Gene3D" id="6.20.210.20">
    <property type="entry name" value="THAP domain"/>
    <property type="match status" value="1"/>
</dbReference>
<dbReference type="InterPro" id="IPR026516">
    <property type="entry name" value="THAP1/10"/>
</dbReference>
<dbReference type="InterPro" id="IPR006612">
    <property type="entry name" value="THAP_Znf"/>
</dbReference>
<dbReference type="InterPro" id="IPR038441">
    <property type="entry name" value="THAP_Znf_sf"/>
</dbReference>
<dbReference type="PANTHER" id="PTHR46600">
    <property type="entry name" value="THAP DOMAIN-CONTAINING"/>
    <property type="match status" value="1"/>
</dbReference>
<dbReference type="PANTHER" id="PTHR46600:SF1">
    <property type="entry name" value="THAP DOMAIN-CONTAINING PROTEIN 1"/>
    <property type="match status" value="1"/>
</dbReference>
<dbReference type="Pfam" id="PF05485">
    <property type="entry name" value="THAP"/>
    <property type="match status" value="1"/>
</dbReference>
<dbReference type="SMART" id="SM00692">
    <property type="entry name" value="DM3"/>
    <property type="match status" value="1"/>
</dbReference>
<dbReference type="SMART" id="SM00980">
    <property type="entry name" value="THAP"/>
    <property type="match status" value="1"/>
</dbReference>
<dbReference type="SUPFAM" id="SSF57716">
    <property type="entry name" value="Glucocorticoid receptor-like (DNA-binding domain)"/>
    <property type="match status" value="1"/>
</dbReference>
<dbReference type="PROSITE" id="PS50950">
    <property type="entry name" value="ZF_THAP"/>
    <property type="match status" value="1"/>
</dbReference>
<name>THAP1_BOVIN</name>
<evidence type="ECO:0000250" key="1"/>
<evidence type="ECO:0000255" key="2"/>
<evidence type="ECO:0000255" key="3">
    <source>
        <dbReference type="PROSITE-ProRule" id="PRU00309"/>
    </source>
</evidence>
<evidence type="ECO:0000305" key="4"/>
<comment type="function">
    <text evidence="1">DNA-binding transcription regulator that regulates endothelial cell proliferation and G1/S cell-cycle progression. Specifically binds the 5'-[AT]NTNN[GT]GGCA[AGT]-3' core DNA sequence and acts by modulating expression of pRB-E2F cell-cycle target genes, including RRM1. May also have pro-apoptotic activity by potentiating both serum-withdrawal and TNF-induced apoptosis (By similarity).</text>
</comment>
<comment type="subunit">
    <text evidence="1">Interacts with PAWR. Component of a THAP1/THAP3-HCFC1-OGT complex that contains, either THAP1 or THAP3, HCFC1 and OGT. Interacts with OGT. Interacts (via the HBM) with HCFC1 (via the Kelch-repeat domain); the interaction recruits HCFC1 to the RRM1 promoter (By similarity).</text>
</comment>
<comment type="subcellular location">
    <subcellularLocation>
        <location evidence="1">Nucleus</location>
        <location evidence="1">Nucleoplasm</location>
    </subcellularLocation>
    <subcellularLocation>
        <location evidence="1">Nucleus</location>
        <location evidence="1">PML body</location>
    </subcellularLocation>
</comment>
<comment type="similarity">
    <text evidence="4">Belongs to the THAP1 family.</text>
</comment>